<reference evidence="9" key="1">
    <citation type="journal article" date="2000" name="Mamm. Genome">
        <title>Isolation, genomic organization, and expression analysis of the mouse and rat homologs of MEFV, the gene for familial Mediterranean fever.</title>
        <authorList>
            <person name="Chae J.J."/>
            <person name="Centola M."/>
            <person name="Aksentijevich I."/>
            <person name="Dutra A."/>
            <person name="Tran M."/>
            <person name="Wood G."/>
            <person name="Nagaraju K."/>
            <person name="Kingma D.W."/>
            <person name="Liu P.P."/>
            <person name="Kastner D.L."/>
        </authorList>
    </citation>
    <scope>NUCLEOTIDE SEQUENCE [MRNA]</scope>
    <scope>TISSUE SPECIFICITY</scope>
    <source>
        <strain>Sprague-Dawley</strain>
    </source>
</reference>
<reference key="2">
    <citation type="journal article" date="2004" name="Nature">
        <title>Genome sequence of the Brown Norway rat yields insights into mammalian evolution.</title>
        <authorList>
            <person name="Gibbs R.A."/>
            <person name="Weinstock G.M."/>
            <person name="Metzker M.L."/>
            <person name="Muzny D.M."/>
            <person name="Sodergren E.J."/>
            <person name="Scherer S."/>
            <person name="Scott G."/>
            <person name="Steffen D."/>
            <person name="Worley K.C."/>
            <person name="Burch P.E."/>
            <person name="Okwuonu G."/>
            <person name="Hines S."/>
            <person name="Lewis L."/>
            <person name="Deramo C."/>
            <person name="Delgado O."/>
            <person name="Dugan-Rocha S."/>
            <person name="Miner G."/>
            <person name="Morgan M."/>
            <person name="Hawes A."/>
            <person name="Gill R."/>
            <person name="Holt R.A."/>
            <person name="Adams M.D."/>
            <person name="Amanatides P.G."/>
            <person name="Baden-Tillson H."/>
            <person name="Barnstead M."/>
            <person name="Chin S."/>
            <person name="Evans C.A."/>
            <person name="Ferriera S."/>
            <person name="Fosler C."/>
            <person name="Glodek A."/>
            <person name="Gu Z."/>
            <person name="Jennings D."/>
            <person name="Kraft C.L."/>
            <person name="Nguyen T."/>
            <person name="Pfannkoch C.M."/>
            <person name="Sitter C."/>
            <person name="Sutton G.G."/>
            <person name="Venter J.C."/>
            <person name="Woodage T."/>
            <person name="Smith D."/>
            <person name="Lee H.-M."/>
            <person name="Gustafson E."/>
            <person name="Cahill P."/>
            <person name="Kana A."/>
            <person name="Doucette-Stamm L."/>
            <person name="Weinstock K."/>
            <person name="Fechtel K."/>
            <person name="Weiss R.B."/>
            <person name="Dunn D.M."/>
            <person name="Green E.D."/>
            <person name="Blakesley R.W."/>
            <person name="Bouffard G.G."/>
            <person name="De Jong P.J."/>
            <person name="Osoegawa K."/>
            <person name="Zhu B."/>
            <person name="Marra M."/>
            <person name="Schein J."/>
            <person name="Bosdet I."/>
            <person name="Fjell C."/>
            <person name="Jones S."/>
            <person name="Krzywinski M."/>
            <person name="Mathewson C."/>
            <person name="Siddiqui A."/>
            <person name="Wye N."/>
            <person name="McPherson J."/>
            <person name="Zhao S."/>
            <person name="Fraser C.M."/>
            <person name="Shetty J."/>
            <person name="Shatsman S."/>
            <person name="Geer K."/>
            <person name="Chen Y."/>
            <person name="Abramzon S."/>
            <person name="Nierman W.C."/>
            <person name="Havlak P.H."/>
            <person name="Chen R."/>
            <person name="Durbin K.J."/>
            <person name="Egan A."/>
            <person name="Ren Y."/>
            <person name="Song X.-Z."/>
            <person name="Li B."/>
            <person name="Liu Y."/>
            <person name="Qin X."/>
            <person name="Cawley S."/>
            <person name="Cooney A.J."/>
            <person name="D'Souza L.M."/>
            <person name="Martin K."/>
            <person name="Wu J.Q."/>
            <person name="Gonzalez-Garay M.L."/>
            <person name="Jackson A.R."/>
            <person name="Kalafus K.J."/>
            <person name="McLeod M.P."/>
            <person name="Milosavljevic A."/>
            <person name="Virk D."/>
            <person name="Volkov A."/>
            <person name="Wheeler D.A."/>
            <person name="Zhang Z."/>
            <person name="Bailey J.A."/>
            <person name="Eichler E.E."/>
            <person name="Tuzun E."/>
            <person name="Birney E."/>
            <person name="Mongin E."/>
            <person name="Ureta-Vidal A."/>
            <person name="Woodwark C."/>
            <person name="Zdobnov E."/>
            <person name="Bork P."/>
            <person name="Suyama M."/>
            <person name="Torrents D."/>
            <person name="Alexandersson M."/>
            <person name="Trask B.J."/>
            <person name="Young J.M."/>
            <person name="Huang H."/>
            <person name="Wang H."/>
            <person name="Xing H."/>
            <person name="Daniels S."/>
            <person name="Gietzen D."/>
            <person name="Schmidt J."/>
            <person name="Stevens K."/>
            <person name="Vitt U."/>
            <person name="Wingrove J."/>
            <person name="Camara F."/>
            <person name="Mar Alba M."/>
            <person name="Abril J.F."/>
            <person name="Guigo R."/>
            <person name="Smit A."/>
            <person name="Dubchak I."/>
            <person name="Rubin E.M."/>
            <person name="Couronne O."/>
            <person name="Poliakov A."/>
            <person name="Huebner N."/>
            <person name="Ganten D."/>
            <person name="Goesele C."/>
            <person name="Hummel O."/>
            <person name="Kreitler T."/>
            <person name="Lee Y.-A."/>
            <person name="Monti J."/>
            <person name="Schulz H."/>
            <person name="Zimdahl H."/>
            <person name="Himmelbauer H."/>
            <person name="Lehrach H."/>
            <person name="Jacob H.J."/>
            <person name="Bromberg S."/>
            <person name="Gullings-Handley J."/>
            <person name="Jensen-Seaman M.I."/>
            <person name="Kwitek A.E."/>
            <person name="Lazar J."/>
            <person name="Pasko D."/>
            <person name="Tonellato P.J."/>
            <person name="Twigger S."/>
            <person name="Ponting C.P."/>
            <person name="Duarte J.M."/>
            <person name="Rice S."/>
            <person name="Goodstadt L."/>
            <person name="Beatson S.A."/>
            <person name="Emes R.D."/>
            <person name="Winter E.E."/>
            <person name="Webber C."/>
            <person name="Brandt P."/>
            <person name="Nyakatura G."/>
            <person name="Adetobi M."/>
            <person name="Chiaromonte F."/>
            <person name="Elnitski L."/>
            <person name="Eswara P."/>
            <person name="Hardison R.C."/>
            <person name="Hou M."/>
            <person name="Kolbe D."/>
            <person name="Makova K."/>
            <person name="Miller W."/>
            <person name="Nekrutenko A."/>
            <person name="Riemer C."/>
            <person name="Schwartz S."/>
            <person name="Taylor J."/>
            <person name="Yang S."/>
            <person name="Zhang Y."/>
            <person name="Lindpaintner K."/>
            <person name="Andrews T.D."/>
            <person name="Caccamo M."/>
            <person name="Clamp M."/>
            <person name="Clarke L."/>
            <person name="Curwen V."/>
            <person name="Durbin R.M."/>
            <person name="Eyras E."/>
            <person name="Searle S.M."/>
            <person name="Cooper G.M."/>
            <person name="Batzoglou S."/>
            <person name="Brudno M."/>
            <person name="Sidow A."/>
            <person name="Stone E.A."/>
            <person name="Payseur B.A."/>
            <person name="Bourque G."/>
            <person name="Lopez-Otin C."/>
            <person name="Puente X.S."/>
            <person name="Chakrabarti K."/>
            <person name="Chatterji S."/>
            <person name="Dewey C."/>
            <person name="Pachter L."/>
            <person name="Bray N."/>
            <person name="Yap V.B."/>
            <person name="Caspi A."/>
            <person name="Tesler G."/>
            <person name="Pevzner P.A."/>
            <person name="Haussler D."/>
            <person name="Roskin K.M."/>
            <person name="Baertsch R."/>
            <person name="Clawson H."/>
            <person name="Furey T.S."/>
            <person name="Hinrichs A.S."/>
            <person name="Karolchik D."/>
            <person name="Kent W.J."/>
            <person name="Rosenbloom K.R."/>
            <person name="Trumbower H."/>
            <person name="Weirauch M."/>
            <person name="Cooper D.N."/>
            <person name="Stenson P.D."/>
            <person name="Ma B."/>
            <person name="Brent M."/>
            <person name="Arumugam M."/>
            <person name="Shteynberg D."/>
            <person name="Copley R.R."/>
            <person name="Taylor M.S."/>
            <person name="Riethman H."/>
            <person name="Mudunuri U."/>
            <person name="Peterson J."/>
            <person name="Guyer M."/>
            <person name="Felsenfeld A."/>
            <person name="Old S."/>
            <person name="Mockrin S."/>
            <person name="Collins F.S."/>
        </authorList>
    </citation>
    <scope>NUCLEOTIDE SEQUENCE [LARGE SCALE GENOMIC DNA]</scope>
    <source>
        <strain>Brown Norway</strain>
    </source>
</reference>
<protein>
    <recommendedName>
        <fullName evidence="8">Pyrin</fullName>
    </recommendedName>
</protein>
<organism>
    <name type="scientific">Rattus norvegicus</name>
    <name type="common">Rat</name>
    <dbReference type="NCBI Taxonomy" id="10116"/>
    <lineage>
        <taxon>Eukaryota</taxon>
        <taxon>Metazoa</taxon>
        <taxon>Chordata</taxon>
        <taxon>Craniata</taxon>
        <taxon>Vertebrata</taxon>
        <taxon>Euteleostomi</taxon>
        <taxon>Mammalia</taxon>
        <taxon>Eutheria</taxon>
        <taxon>Euarchontoglires</taxon>
        <taxon>Glires</taxon>
        <taxon>Rodentia</taxon>
        <taxon>Myomorpha</taxon>
        <taxon>Muroidea</taxon>
        <taxon>Muridae</taxon>
        <taxon>Murinae</taxon>
        <taxon>Rattus</taxon>
    </lineage>
</organism>
<evidence type="ECO:0000250" key="1">
    <source>
        <dbReference type="UniProtKB" id="O15553"/>
    </source>
</evidence>
<evidence type="ECO:0000250" key="2">
    <source>
        <dbReference type="UniProtKB" id="Q9JJ26"/>
    </source>
</evidence>
<evidence type="ECO:0000255" key="3"/>
<evidence type="ECO:0000255" key="4">
    <source>
        <dbReference type="PROSITE-ProRule" id="PRU00024"/>
    </source>
</evidence>
<evidence type="ECO:0000255" key="5">
    <source>
        <dbReference type="PROSITE-ProRule" id="PRU00061"/>
    </source>
</evidence>
<evidence type="ECO:0000256" key="6">
    <source>
        <dbReference type="SAM" id="MobiDB-lite"/>
    </source>
</evidence>
<evidence type="ECO:0000269" key="7">
    <source>
    </source>
</evidence>
<evidence type="ECO:0000303" key="8">
    <source>
    </source>
</evidence>
<evidence type="ECO:0000305" key="9"/>
<evidence type="ECO:0000312" key="10">
    <source>
        <dbReference type="RGD" id="61889"/>
    </source>
</evidence>
<proteinExistence type="evidence at transcript level"/>
<name>MEFV_RAT</name>
<gene>
    <name evidence="8 10" type="primary">Mefv</name>
</gene>
<sequence length="747" mass="83743">MANTRVDHLLNTLEELLPYELEKFKFKLHTTSLEKGHSRIPLSLVKMARPIKLTRLLLTYYGEEYAVRLTLQILRATNQRQLAEELHKATGPEHLTEENGVGGSVQSSAENKDKGVKGSDVPGEDEAQQNDDESDILPPIQAEVGKGPQKKSLAKRKDQRGPESLDSQTKPGARSAAPLYRRTLVTQSPGDKENRAGAQPQECQLCREAARSTAMSQGGERSRRLKCICLQERSDPGVLKLPLTQKKENPQIQKLFRLKRKQEMAVSFVREATLNGRTTGTLEKGVGIPEHSMMLDEETSRNMSSKISLTREKRCTASWTENGNGGPETPETLGETVSSILCDSCSPKVLLSLGEKLAQTPEDPASLGQAASKGRSRDKVACPLCHTQGELPAKACVQSSCSCSVAPGDPKASGRHSICFQCQSSRAGKSCEAQSPQFLPQCPRHMKQVQLLFCEDHREPICLICRLSQEHQGHRVRPIEEAALQYKEQIRKQLERLREMRGYVEEHKLPADKKAEDFLKQTETQKQRISCPLEKLFQFLEQQEQLFVTWLQELVQTIGKVRETYYTQVSLLDKLIGELEAKQDQPEWELMQDIGATLHRAETMTASELLGIPPGVKEKLHLLYQKSKSAEKNMQRFSEMLGSEMAFSASDVATREGCRPSTTKAQALIPTVHLKCDGAHTQDFDVILCAELEAGGSEPQDYLHPSSAQDTPELHEIHSQNNKRKFKSFLKWKPSFSRTDRCLRTCW</sequence>
<feature type="chain" id="PRO_0000220366" description="Pyrin">
    <location>
        <begin position="1"/>
        <end position="747"/>
    </location>
</feature>
<feature type="domain" description="Pyrin" evidence="5">
    <location>
        <begin position="1"/>
        <end position="92"/>
    </location>
</feature>
<feature type="zinc finger region" description="B box-type" evidence="4">
    <location>
        <begin position="442"/>
        <end position="479"/>
    </location>
</feature>
<feature type="region of interest" description="Disordered" evidence="6">
    <location>
        <begin position="89"/>
        <end position="181"/>
    </location>
</feature>
<feature type="region of interest" description="Required for homotrimerization and induction of pyroptosomes" evidence="1">
    <location>
        <begin position="487"/>
        <end position="645"/>
    </location>
</feature>
<feature type="region of interest" description="Disordered" evidence="6">
    <location>
        <begin position="698"/>
        <end position="720"/>
    </location>
</feature>
<feature type="coiled-coil region" evidence="3">
    <location>
        <begin position="479"/>
        <end position="508"/>
    </location>
</feature>
<feature type="compositionally biased region" description="Acidic residues" evidence="6">
    <location>
        <begin position="122"/>
        <end position="135"/>
    </location>
</feature>
<feature type="binding site" evidence="4">
    <location>
        <position position="442"/>
    </location>
    <ligand>
        <name>Zn(2+)</name>
        <dbReference type="ChEBI" id="CHEBI:29105"/>
    </ligand>
</feature>
<feature type="binding site" evidence="4">
    <location>
        <position position="445"/>
    </location>
    <ligand>
        <name>Zn(2+)</name>
        <dbReference type="ChEBI" id="CHEBI:29105"/>
    </ligand>
</feature>
<feature type="binding site" evidence="4">
    <location>
        <position position="465"/>
    </location>
    <ligand>
        <name>Zn(2+)</name>
        <dbReference type="ChEBI" id="CHEBI:29105"/>
    </ligand>
</feature>
<feature type="binding site" evidence="4">
    <location>
        <position position="471"/>
    </location>
    <ligand>
        <name>Zn(2+)</name>
        <dbReference type="ChEBI" id="CHEBI:29105"/>
    </ligand>
</feature>
<feature type="sequence conflict" description="In Ref. 1; AAF03767." evidence="9" ref="1">
    <original>P</original>
    <variation>L</variation>
    <location>
        <position position="122"/>
    </location>
</feature>
<feature type="sequence conflict" description="In Ref. 1; AAF03767." evidence="9" ref="1">
    <original>PQEC</original>
    <variation>TPQNA</variation>
    <location>
        <begin position="200"/>
        <end position="203"/>
    </location>
</feature>
<feature type="sequence conflict" description="In Ref. 1; AAF03767." evidence="9" ref="1">
    <original>R</original>
    <variation>RN</variation>
    <location>
        <position position="211"/>
    </location>
</feature>
<feature type="sequence conflict" description="In Ref. 1; AAF03767." evidence="9" ref="1">
    <original>E</original>
    <variation>ET</variation>
    <location>
        <position position="271"/>
    </location>
</feature>
<feature type="sequence conflict" description="In Ref. 1; AAF03767." evidence="9" ref="1">
    <original>H</original>
    <variation>C</variation>
    <location>
        <position position="416"/>
    </location>
</feature>
<keyword id="KW-0009">Actin-binding</keyword>
<keyword id="KW-0966">Cell projection</keyword>
<keyword id="KW-0175">Coiled coil</keyword>
<keyword id="KW-0963">Cytoplasm</keyword>
<keyword id="KW-0968">Cytoplasmic vesicle</keyword>
<keyword id="KW-0206">Cytoskeleton</keyword>
<keyword id="KW-0391">Immunity</keyword>
<keyword id="KW-0395">Inflammatory response</keyword>
<keyword id="KW-0399">Innate immunity</keyword>
<keyword id="KW-0479">Metal-binding</keyword>
<keyword id="KW-0493">Microtubule</keyword>
<keyword id="KW-0539">Nucleus</keyword>
<keyword id="KW-1185">Reference proteome</keyword>
<keyword id="KW-0862">Zinc</keyword>
<keyword id="KW-0863">Zinc-finger</keyword>
<dbReference type="EMBL" id="AF143410">
    <property type="protein sequence ID" value="AAF03767.1"/>
    <property type="molecule type" value="mRNA"/>
</dbReference>
<dbReference type="EMBL" id="AABR07072080">
    <property type="status" value="NOT_ANNOTATED_CDS"/>
    <property type="molecule type" value="Genomic_DNA"/>
</dbReference>
<dbReference type="RefSeq" id="NP_113822.1">
    <property type="nucleotide sequence ID" value="NM_031634.1"/>
</dbReference>
<dbReference type="SMR" id="Q9JJ25"/>
<dbReference type="FunCoup" id="Q9JJ25">
    <property type="interactions" value="158"/>
</dbReference>
<dbReference type="STRING" id="10116.ENSRNOP00000070256"/>
<dbReference type="PhosphoSitePlus" id="Q9JJ25"/>
<dbReference type="PaxDb" id="10116-ENSRNOP00000011073"/>
<dbReference type="GeneID" id="58923"/>
<dbReference type="KEGG" id="rno:58923"/>
<dbReference type="UCSC" id="RGD:61889">
    <property type="organism name" value="rat"/>
</dbReference>
<dbReference type="AGR" id="RGD:61889"/>
<dbReference type="CTD" id="4210"/>
<dbReference type="RGD" id="61889">
    <property type="gene designation" value="Mefv"/>
</dbReference>
<dbReference type="eggNOG" id="KOG2177">
    <property type="taxonomic scope" value="Eukaryota"/>
</dbReference>
<dbReference type="InParanoid" id="Q9JJ25"/>
<dbReference type="OrthoDB" id="9445371at2759"/>
<dbReference type="PhylomeDB" id="Q9JJ25"/>
<dbReference type="Reactome" id="R-RNO-844456">
    <property type="pathway name" value="The NLRP3 inflammasome"/>
</dbReference>
<dbReference type="PRO" id="PR:Q9JJ25"/>
<dbReference type="Proteomes" id="UP000002494">
    <property type="component" value="Chromosome 10"/>
</dbReference>
<dbReference type="Bgee" id="ENSRNOG00000008134">
    <property type="expression patterns" value="Expressed in spleen and 12 other cell types or tissues"/>
</dbReference>
<dbReference type="GO" id="GO:0005776">
    <property type="term" value="C:autophagosome"/>
    <property type="evidence" value="ECO:0007669"/>
    <property type="project" value="UniProtKB-SubCell"/>
</dbReference>
<dbReference type="GO" id="GO:0061702">
    <property type="term" value="C:canonical inflammasome complex"/>
    <property type="evidence" value="ECO:0000266"/>
    <property type="project" value="RGD"/>
</dbReference>
<dbReference type="GO" id="GO:0005737">
    <property type="term" value="C:cytoplasm"/>
    <property type="evidence" value="ECO:0000250"/>
    <property type="project" value="UniProtKB"/>
</dbReference>
<dbReference type="GO" id="GO:0031410">
    <property type="term" value="C:cytoplasmic vesicle"/>
    <property type="evidence" value="ECO:0007669"/>
    <property type="project" value="UniProtKB-KW"/>
</dbReference>
<dbReference type="GO" id="GO:0005829">
    <property type="term" value="C:cytosol"/>
    <property type="evidence" value="ECO:0000318"/>
    <property type="project" value="GO_Central"/>
</dbReference>
<dbReference type="GO" id="GO:0030027">
    <property type="term" value="C:lamellipodium"/>
    <property type="evidence" value="ECO:0007669"/>
    <property type="project" value="UniProtKB-SubCell"/>
</dbReference>
<dbReference type="GO" id="GO:0005874">
    <property type="term" value="C:microtubule"/>
    <property type="evidence" value="ECO:0007669"/>
    <property type="project" value="UniProtKB-KW"/>
</dbReference>
<dbReference type="GO" id="GO:0005875">
    <property type="term" value="C:microtubule associated complex"/>
    <property type="evidence" value="ECO:0000250"/>
    <property type="project" value="UniProtKB"/>
</dbReference>
<dbReference type="GO" id="GO:0005654">
    <property type="term" value="C:nucleoplasm"/>
    <property type="evidence" value="ECO:0000318"/>
    <property type="project" value="GO_Central"/>
</dbReference>
<dbReference type="GO" id="GO:0005634">
    <property type="term" value="C:nucleus"/>
    <property type="evidence" value="ECO:0000266"/>
    <property type="project" value="RGD"/>
</dbReference>
<dbReference type="GO" id="GO:0001726">
    <property type="term" value="C:ruffle"/>
    <property type="evidence" value="ECO:0007669"/>
    <property type="project" value="UniProtKB-SubCell"/>
</dbReference>
<dbReference type="GO" id="GO:0003779">
    <property type="term" value="F:actin binding"/>
    <property type="evidence" value="ECO:0000250"/>
    <property type="project" value="UniProtKB"/>
</dbReference>
<dbReference type="GO" id="GO:0042802">
    <property type="term" value="F:identical protein binding"/>
    <property type="evidence" value="ECO:0000266"/>
    <property type="project" value="RGD"/>
</dbReference>
<dbReference type="GO" id="GO:0061630">
    <property type="term" value="F:ubiquitin protein ligase activity"/>
    <property type="evidence" value="ECO:0000318"/>
    <property type="project" value="GO_Central"/>
</dbReference>
<dbReference type="GO" id="GO:0008270">
    <property type="term" value="F:zinc ion binding"/>
    <property type="evidence" value="ECO:0000303"/>
    <property type="project" value="UniProtKB"/>
</dbReference>
<dbReference type="GO" id="GO:0006954">
    <property type="term" value="P:inflammatory response"/>
    <property type="evidence" value="ECO:0000250"/>
    <property type="project" value="UniProtKB"/>
</dbReference>
<dbReference type="GO" id="GO:0045087">
    <property type="term" value="P:innate immune response"/>
    <property type="evidence" value="ECO:0000318"/>
    <property type="project" value="GO_Central"/>
</dbReference>
<dbReference type="GO" id="GO:1900016">
    <property type="term" value="P:negative regulation of cytokine production involved in inflammatory response"/>
    <property type="evidence" value="ECO:0000250"/>
    <property type="project" value="UniProtKB"/>
</dbReference>
<dbReference type="GO" id="GO:0050728">
    <property type="term" value="P:negative regulation of inflammatory response"/>
    <property type="evidence" value="ECO:0000266"/>
    <property type="project" value="RGD"/>
</dbReference>
<dbReference type="GO" id="GO:0032691">
    <property type="term" value="P:negative regulation of interleukin-1 beta production"/>
    <property type="evidence" value="ECO:0000266"/>
    <property type="project" value="RGD"/>
</dbReference>
<dbReference type="GO" id="GO:0032695">
    <property type="term" value="P:negative regulation of interleukin-12 production"/>
    <property type="evidence" value="ECO:0000266"/>
    <property type="project" value="RGD"/>
</dbReference>
<dbReference type="GO" id="GO:0071641">
    <property type="term" value="P:negative regulation of macrophage inflammatory protein 1 alpha production"/>
    <property type="evidence" value="ECO:0000266"/>
    <property type="project" value="RGD"/>
</dbReference>
<dbReference type="GO" id="GO:1900226">
    <property type="term" value="P:negative regulation of NLRP3 inflammasome complex assembly"/>
    <property type="evidence" value="ECO:0000250"/>
    <property type="project" value="UniProtKB"/>
</dbReference>
<dbReference type="GO" id="GO:0010508">
    <property type="term" value="P:positive regulation of autophagy"/>
    <property type="evidence" value="ECO:0000250"/>
    <property type="project" value="UniProtKB"/>
</dbReference>
<dbReference type="GO" id="GO:0050729">
    <property type="term" value="P:positive regulation of inflammatory response"/>
    <property type="evidence" value="ECO:0000266"/>
    <property type="project" value="RGD"/>
</dbReference>
<dbReference type="GO" id="GO:0032731">
    <property type="term" value="P:positive regulation of interleukin-1 beta production"/>
    <property type="evidence" value="ECO:0000266"/>
    <property type="project" value="RGD"/>
</dbReference>
<dbReference type="GO" id="GO:1904270">
    <property type="term" value="P:pyroptosome complex assembly"/>
    <property type="evidence" value="ECO:0000250"/>
    <property type="project" value="UniProtKB"/>
</dbReference>
<dbReference type="GO" id="GO:0010468">
    <property type="term" value="P:regulation of gene expression"/>
    <property type="evidence" value="ECO:0000318"/>
    <property type="project" value="GO_Central"/>
</dbReference>
<dbReference type="GO" id="GO:0032651">
    <property type="term" value="P:regulation of interleukin-1 beta production"/>
    <property type="evidence" value="ECO:0000250"/>
    <property type="project" value="UniProtKB"/>
</dbReference>
<dbReference type="GO" id="GO:0032496">
    <property type="term" value="P:response to lipopolysaccharide"/>
    <property type="evidence" value="ECO:0000270"/>
    <property type="project" value="RGD"/>
</dbReference>
<dbReference type="GO" id="GO:0034021">
    <property type="term" value="P:response to silicon dioxide"/>
    <property type="evidence" value="ECO:0000270"/>
    <property type="project" value="RGD"/>
</dbReference>
<dbReference type="GO" id="GO:0034341">
    <property type="term" value="P:response to type II interferon"/>
    <property type="evidence" value="ECO:0000250"/>
    <property type="project" value="UniProtKB"/>
</dbReference>
<dbReference type="CDD" id="cd19771">
    <property type="entry name" value="Bbox2_TRIM20"/>
    <property type="match status" value="1"/>
</dbReference>
<dbReference type="FunFam" id="3.30.160.60:FF:001023">
    <property type="entry name" value="MEFV, pyrin innate immunity regulator"/>
    <property type="match status" value="1"/>
</dbReference>
<dbReference type="Gene3D" id="3.30.160.60">
    <property type="entry name" value="Classic Zinc Finger"/>
    <property type="match status" value="1"/>
</dbReference>
<dbReference type="Gene3D" id="1.10.533.10">
    <property type="entry name" value="Death Domain, Fas"/>
    <property type="match status" value="1"/>
</dbReference>
<dbReference type="InterPro" id="IPR004020">
    <property type="entry name" value="DAPIN"/>
</dbReference>
<dbReference type="InterPro" id="IPR011029">
    <property type="entry name" value="DEATH-like_dom_sf"/>
</dbReference>
<dbReference type="InterPro" id="IPR050143">
    <property type="entry name" value="TRIM/RBCC"/>
</dbReference>
<dbReference type="InterPro" id="IPR000315">
    <property type="entry name" value="Znf_B-box"/>
</dbReference>
<dbReference type="PANTHER" id="PTHR24103">
    <property type="entry name" value="E3 UBIQUITIN-PROTEIN LIGASE TRIM"/>
    <property type="match status" value="1"/>
</dbReference>
<dbReference type="Pfam" id="PF02758">
    <property type="entry name" value="PYRIN"/>
    <property type="match status" value="1"/>
</dbReference>
<dbReference type="Pfam" id="PF00643">
    <property type="entry name" value="zf-B_box"/>
    <property type="match status" value="1"/>
</dbReference>
<dbReference type="SMART" id="SM00336">
    <property type="entry name" value="BBOX"/>
    <property type="match status" value="1"/>
</dbReference>
<dbReference type="SMART" id="SM01289">
    <property type="entry name" value="PYRIN"/>
    <property type="match status" value="1"/>
</dbReference>
<dbReference type="SUPFAM" id="SSF57845">
    <property type="entry name" value="B-box zinc-binding domain"/>
    <property type="match status" value="1"/>
</dbReference>
<dbReference type="SUPFAM" id="SSF47986">
    <property type="entry name" value="DEATH domain"/>
    <property type="match status" value="1"/>
</dbReference>
<dbReference type="PROSITE" id="PS50824">
    <property type="entry name" value="DAPIN"/>
    <property type="match status" value="1"/>
</dbReference>
<dbReference type="PROSITE" id="PS50119">
    <property type="entry name" value="ZF_BBOX"/>
    <property type="match status" value="1"/>
</dbReference>
<comment type="function">
    <text evidence="1 2">Involved in the regulation of innate immunity and the inflammatory response in response to IFNG/IFN-gamma. Organizes autophagic machinery by serving as a platform for the assembly of ULK1, Beclin 1/BECN1, ATG16L1, and ATG8 family members and recognizes specific autophagy targets, thus coordinating target recognition with assembly of the autophagic apparatus and initiation of autophagy. Acts as an autophagy receptor for the degradation of several inflammasome components, including CASP1, NLRP1 and NLRP3, hence preventing excessive IL1B- and IL18-mediated inflammation. However, it can also have a positive effect in the inflammatory pathway, acting as an innate immune sensor that triggers PYCARD/ASC specks formation, caspase-1 activation, and IL1B and IL18 production (By similarity). Together with AIM2, also acts as a mediator of pyroptosis, necroptosis and apoptosis (PANoptosis), an integral part of host defense against pathogens, in response to bacterial infection (By similarity). It is required for PSTPIP1-induced PYCARD/ASC oligomerization and inflammasome formation. Recruits PSTPIP1 to inflammasomes, and is required for PSTPIP1 oligomerization (By similarity).</text>
</comment>
<comment type="subunit">
    <text evidence="1 2">Homotrimer. Interacts (via the B box-type zinc finger) with PSTPIP1. Interacts (via the B30.2/SPRY domain) with several components of the inflammasome complex, including CASP1 p20 and p10 subunits, CASP5, PYCARD, NLRP1, NLRP2 and NLRP3, as well as with unprocessed IL1B; this interaction may lead to autophagic degradation of these proteins (By similarity). Component of the AIM2 PANoptosome complex, a multiprotein complex that drives inflammatory cell death (PANoptosis) (By similarity). Interacts with NFKBIA and RELA. Interacts weakly with VASP and ACTR3. Interacts with active ULK1 (phosphorylated on 'Ser-317') and BECN1 simultaneously. Also interacts with ATG16L1 (via WD repeats), and with ATG8 family members, including GABARAP, GABARAPL1 and, to a lesser extent, GABARAPL2, MAP1LC3A/LC3A and MAP1LC3C/LC3C. Interacts with TRIM21. Interacts with YWHAB, YWHAE, YWHAG, YWHAH, YWHAQ and YWHAZ; the interaction is required for the down-regulation of pyrin pro-inflammatory activity (By similarity).</text>
</comment>
<comment type="subcellular location">
    <subcellularLocation>
        <location evidence="1">Cytoplasm</location>
        <location evidence="1">Cytoskeleton</location>
    </subcellularLocation>
    <subcellularLocation>
        <location evidence="1">Cell projection</location>
        <location evidence="1">Ruffle</location>
    </subcellularLocation>
    <subcellularLocation>
        <location evidence="1">Cell projection</location>
        <location evidence="1">Lamellipodium</location>
    </subcellularLocation>
    <subcellularLocation>
        <location evidence="1">Cytoplasm</location>
    </subcellularLocation>
    <subcellularLocation>
        <location evidence="1">Cytoplasmic vesicle</location>
        <location evidence="1">Autophagosome</location>
    </subcellularLocation>
    <subcellularLocation>
        <location evidence="1">Nucleus</location>
    </subcellularLocation>
    <text evidence="1">Associated with microtubules and with the filamentous actin of perinuclear filaments and peripheral lamellar ruffles. In pre-apoptotic cells, colocalizes with PYCARD/ASC in large specks (pyroptosomes). In migrating monocytes, strongly polarized at the leading edge of the cell where it colocalizes with polymerizing actin and PYCARD/ASC (By similarity).</text>
</comment>
<comment type="tissue specificity">
    <text evidence="7">Expressed in spleen and, to a lesser degree in the lung. Not expressed in thymus, testis, ovary, heart, brain, liver, kidney and muscle.</text>
</comment>
<comment type="domain">
    <text evidence="1">The B box-type zinc finger interacts, possibly intramolecularly, with the pyrin domain; this may be an autoinhibitory mechanism released by PSTPIP1 binding.</text>
</comment>
<comment type="PTM">
    <text evidence="1">Degraded along with the delivery of its substrates to autolysosomal compartments (at protein level).</text>
</comment>
<comment type="caution">
    <text evidence="9">Lacks the B30.2/SPRY domain found in the human ortholog, thus may have divergent function(s).</text>
</comment>
<accession>Q9JJ25</accession>
<accession>A0A0G2JYG3</accession>